<reference key="1">
    <citation type="journal article" date="2005" name="Nat. Biotechnol.">
        <title>The genome sequence of the ethanologenic bacterium Zymomonas mobilis ZM4.</title>
        <authorList>
            <person name="Seo J.-S."/>
            <person name="Chong H."/>
            <person name="Park H.S."/>
            <person name="Yoon K.-O."/>
            <person name="Jung C."/>
            <person name="Kim J.J."/>
            <person name="Hong J.H."/>
            <person name="Kim H."/>
            <person name="Kim J.-H."/>
            <person name="Kil J.-I."/>
            <person name="Park C.J."/>
            <person name="Oh H.-M."/>
            <person name="Lee J.-S."/>
            <person name="Jin S.-J."/>
            <person name="Um H.-W."/>
            <person name="Lee H.-J."/>
            <person name="Oh S.-J."/>
            <person name="Kim J.Y."/>
            <person name="Kang H.L."/>
            <person name="Lee S.Y."/>
            <person name="Lee K.J."/>
            <person name="Kang H.S."/>
        </authorList>
    </citation>
    <scope>NUCLEOTIDE SEQUENCE [LARGE SCALE GENOMIC DNA]</scope>
    <source>
        <strain>ATCC 31821 / ZM4 / CP4</strain>
    </source>
</reference>
<gene>
    <name evidence="1" type="primary">nifW</name>
    <name type="ordered locus">ZMO1836</name>
</gene>
<sequence length="108" mass="12545">MSFADTLRQLSSAEDFFSALHVDYDPQILNVARLHILRKMRLYLEADKGDLADESLQKQQYQHYLAQAYNDFVHSSPIKERLFKVHQEAVKPVKLPMVKLTSLTMPPE</sequence>
<proteinExistence type="inferred from homology"/>
<keyword id="KW-0535">Nitrogen fixation</keyword>
<keyword id="KW-1185">Reference proteome</keyword>
<feature type="chain" id="PRO_0000219544" description="Nitrogenase-stabilizing/protective protein NifW">
    <location>
        <begin position="1"/>
        <end position="108"/>
    </location>
</feature>
<comment type="function">
    <text evidence="1">May protect the nitrogenase Fe-Mo protein from oxidative damage.</text>
</comment>
<comment type="subunit">
    <text evidence="1">Homotrimer; associates with NifD.</text>
</comment>
<comment type="similarity">
    <text evidence="1">Belongs to the NifW family.</text>
</comment>
<name>NIFW_ZYMMO</name>
<evidence type="ECO:0000255" key="1">
    <source>
        <dbReference type="HAMAP-Rule" id="MF_00529"/>
    </source>
</evidence>
<dbReference type="EMBL" id="AE008692">
    <property type="protein sequence ID" value="AAV90460.2"/>
    <property type="molecule type" value="Genomic_DNA"/>
</dbReference>
<dbReference type="RefSeq" id="WP_011241568.1">
    <property type="nucleotide sequence ID" value="NZ_CP035711.1"/>
</dbReference>
<dbReference type="SMR" id="Q5NLF0"/>
<dbReference type="STRING" id="264203.ZMO1836"/>
<dbReference type="KEGG" id="zmo:ZMO1836"/>
<dbReference type="eggNOG" id="ENOG50330W8">
    <property type="taxonomic scope" value="Bacteria"/>
</dbReference>
<dbReference type="HOGENOM" id="CLU_145318_1_0_5"/>
<dbReference type="Proteomes" id="UP000001173">
    <property type="component" value="Chromosome"/>
</dbReference>
<dbReference type="GO" id="GO:0009399">
    <property type="term" value="P:nitrogen fixation"/>
    <property type="evidence" value="ECO:0007669"/>
    <property type="project" value="UniProtKB-UniRule"/>
</dbReference>
<dbReference type="HAMAP" id="MF_00529">
    <property type="entry name" value="NifW"/>
    <property type="match status" value="1"/>
</dbReference>
<dbReference type="InterPro" id="IPR004893">
    <property type="entry name" value="NifW"/>
</dbReference>
<dbReference type="Pfam" id="PF03206">
    <property type="entry name" value="NifW"/>
    <property type="match status" value="1"/>
</dbReference>
<dbReference type="PIRSF" id="PIRSF005790">
    <property type="entry name" value="NifW"/>
    <property type="match status" value="1"/>
</dbReference>
<accession>Q5NLF0</accession>
<protein>
    <recommendedName>
        <fullName evidence="1">Nitrogenase-stabilizing/protective protein NifW</fullName>
    </recommendedName>
</protein>
<organism>
    <name type="scientific">Zymomonas mobilis subsp. mobilis (strain ATCC 31821 / ZM4 / CP4)</name>
    <dbReference type="NCBI Taxonomy" id="264203"/>
    <lineage>
        <taxon>Bacteria</taxon>
        <taxon>Pseudomonadati</taxon>
        <taxon>Pseudomonadota</taxon>
        <taxon>Alphaproteobacteria</taxon>
        <taxon>Sphingomonadales</taxon>
        <taxon>Zymomonadaceae</taxon>
        <taxon>Zymomonas</taxon>
    </lineage>
</organism>